<organism>
    <name type="scientific">Malacoplasma penetrans (strain HF-2)</name>
    <name type="common">Mycoplasma penetrans</name>
    <dbReference type="NCBI Taxonomy" id="272633"/>
    <lineage>
        <taxon>Bacteria</taxon>
        <taxon>Bacillati</taxon>
        <taxon>Mycoplasmatota</taxon>
        <taxon>Mycoplasmoidales</taxon>
        <taxon>Mycoplasmoidaceae</taxon>
        <taxon>Malacoplasma</taxon>
    </lineage>
</organism>
<comment type="function">
    <text evidence="1">Catalyzes the attachment of glutamate to tRNA(Glu) in a two-step reaction: glutamate is first activated by ATP to form Glu-AMP and then transferred to the acceptor end of tRNA(Glu).</text>
</comment>
<comment type="catalytic activity">
    <reaction evidence="1">
        <text>tRNA(Glu) + L-glutamate + ATP = L-glutamyl-tRNA(Glu) + AMP + diphosphate</text>
        <dbReference type="Rhea" id="RHEA:23540"/>
        <dbReference type="Rhea" id="RHEA-COMP:9663"/>
        <dbReference type="Rhea" id="RHEA-COMP:9680"/>
        <dbReference type="ChEBI" id="CHEBI:29985"/>
        <dbReference type="ChEBI" id="CHEBI:30616"/>
        <dbReference type="ChEBI" id="CHEBI:33019"/>
        <dbReference type="ChEBI" id="CHEBI:78442"/>
        <dbReference type="ChEBI" id="CHEBI:78520"/>
        <dbReference type="ChEBI" id="CHEBI:456215"/>
        <dbReference type="EC" id="6.1.1.17"/>
    </reaction>
</comment>
<comment type="subunit">
    <text evidence="1">Monomer.</text>
</comment>
<comment type="subcellular location">
    <subcellularLocation>
        <location evidence="1">Cytoplasm</location>
    </subcellularLocation>
</comment>
<comment type="similarity">
    <text evidence="1">Belongs to the class-I aminoacyl-tRNA synthetase family. Glutamate--tRNA ligase type 1 subfamily.</text>
</comment>
<protein>
    <recommendedName>
        <fullName evidence="1">Glutamate--tRNA ligase</fullName>
        <ecNumber evidence="1">6.1.1.17</ecNumber>
    </recommendedName>
    <alternativeName>
        <fullName evidence="1">Glutamyl-tRNA synthetase</fullName>
        <shortName evidence="1">GluRS</shortName>
    </alternativeName>
</protein>
<reference key="1">
    <citation type="journal article" date="2002" name="Nucleic Acids Res.">
        <title>The complete genomic sequence of Mycoplasma penetrans, an intracellular bacterial pathogen in humans.</title>
        <authorList>
            <person name="Sasaki Y."/>
            <person name="Ishikawa J."/>
            <person name="Yamashita A."/>
            <person name="Oshima K."/>
            <person name="Kenri T."/>
            <person name="Furuya K."/>
            <person name="Yoshino C."/>
            <person name="Horino A."/>
            <person name="Shiba T."/>
            <person name="Sasaki T."/>
            <person name="Hattori M."/>
        </authorList>
    </citation>
    <scope>NUCLEOTIDE SEQUENCE [LARGE SCALE GENOMIC DNA]</scope>
    <source>
        <strain>HF-2</strain>
    </source>
</reference>
<feature type="chain" id="PRO_0000119607" description="Glutamate--tRNA ligase">
    <location>
        <begin position="1"/>
        <end position="487"/>
    </location>
</feature>
<feature type="short sequence motif" description="'HIGH' region" evidence="1">
    <location>
        <begin position="13"/>
        <end position="23"/>
    </location>
</feature>
<feature type="short sequence motif" description="'KMSKS' region" evidence="1">
    <location>
        <begin position="255"/>
        <end position="259"/>
    </location>
</feature>
<feature type="binding site" evidence="1">
    <location>
        <position position="258"/>
    </location>
    <ligand>
        <name>ATP</name>
        <dbReference type="ChEBI" id="CHEBI:30616"/>
    </ligand>
</feature>
<accession>Q8EU94</accession>
<name>SYE_MALP2</name>
<keyword id="KW-0030">Aminoacyl-tRNA synthetase</keyword>
<keyword id="KW-0067">ATP-binding</keyword>
<keyword id="KW-0963">Cytoplasm</keyword>
<keyword id="KW-0436">Ligase</keyword>
<keyword id="KW-0547">Nucleotide-binding</keyword>
<keyword id="KW-0648">Protein biosynthesis</keyword>
<keyword id="KW-1185">Reference proteome</keyword>
<sequence>MNKNKIIRTRYAPSPTGLFHIGGARTALFNYLFAKKNNGDFIVRIEDTDIDRNVENGIESQLLNLKWLKIFPDESPLNPGNYGPYIQTERLPIYKEKAEQLLKEKKAYRCFCTPEQLEKNRKKALKDGKTPKYNRTCLSLSEDQISEKIKNNIPFSLRFKITDNTEIKWNDIVRGEMCVPTSALTDPVILKSNGIPTYNFAVVIDDNDMLISHIIRGEEHLSNTPYQIAINEALDINKNIVFGHLSVIIDETGKKLSKRNMELKQFIEDYKNMGFSPEAIVNFMYLLGLSSSDNKEIFSLAEAVKNFDIKKVSKSPTTFDFKKMEWISSEHFKMMSDSAFISFAKPFITIDLGFLKGNENDVILLFKNQIAYAKQINDLIDETFFSPETFAAVCEKFPFLKQADTKELIKVFIKQLQELPNWNISEIATVIDAVKKQTGKSGKELFMPIRVYSSHNSHGPELAKVIFILGKDKVIKNAKSFLDNKGA</sequence>
<proteinExistence type="inferred from homology"/>
<dbReference type="EC" id="6.1.1.17" evidence="1"/>
<dbReference type="EMBL" id="BA000026">
    <property type="protein sequence ID" value="BAC44822.1"/>
    <property type="molecule type" value="Genomic_DNA"/>
</dbReference>
<dbReference type="RefSeq" id="WP_011077850.1">
    <property type="nucleotide sequence ID" value="NC_004432.1"/>
</dbReference>
<dbReference type="SMR" id="Q8EU94"/>
<dbReference type="FunCoup" id="Q8EU94">
    <property type="interactions" value="262"/>
</dbReference>
<dbReference type="STRING" id="272633.gene:10732156"/>
<dbReference type="KEGG" id="mpe:MYPE10370"/>
<dbReference type="eggNOG" id="COG0008">
    <property type="taxonomic scope" value="Bacteria"/>
</dbReference>
<dbReference type="HOGENOM" id="CLU_015768_6_1_14"/>
<dbReference type="InParanoid" id="Q8EU94"/>
<dbReference type="Proteomes" id="UP000002522">
    <property type="component" value="Chromosome"/>
</dbReference>
<dbReference type="GO" id="GO:0005829">
    <property type="term" value="C:cytosol"/>
    <property type="evidence" value="ECO:0007669"/>
    <property type="project" value="TreeGrafter"/>
</dbReference>
<dbReference type="GO" id="GO:0005524">
    <property type="term" value="F:ATP binding"/>
    <property type="evidence" value="ECO:0007669"/>
    <property type="project" value="UniProtKB-UniRule"/>
</dbReference>
<dbReference type="GO" id="GO:0004818">
    <property type="term" value="F:glutamate-tRNA ligase activity"/>
    <property type="evidence" value="ECO:0007669"/>
    <property type="project" value="UniProtKB-UniRule"/>
</dbReference>
<dbReference type="GO" id="GO:0000049">
    <property type="term" value="F:tRNA binding"/>
    <property type="evidence" value="ECO:0007669"/>
    <property type="project" value="InterPro"/>
</dbReference>
<dbReference type="GO" id="GO:0008270">
    <property type="term" value="F:zinc ion binding"/>
    <property type="evidence" value="ECO:0007669"/>
    <property type="project" value="InterPro"/>
</dbReference>
<dbReference type="GO" id="GO:0006424">
    <property type="term" value="P:glutamyl-tRNA aminoacylation"/>
    <property type="evidence" value="ECO:0007669"/>
    <property type="project" value="UniProtKB-UniRule"/>
</dbReference>
<dbReference type="CDD" id="cd00808">
    <property type="entry name" value="GluRS_core"/>
    <property type="match status" value="1"/>
</dbReference>
<dbReference type="FunFam" id="3.40.50.620:FF:000007">
    <property type="entry name" value="Glutamate--tRNA ligase"/>
    <property type="match status" value="1"/>
</dbReference>
<dbReference type="Gene3D" id="1.10.10.350">
    <property type="match status" value="1"/>
</dbReference>
<dbReference type="Gene3D" id="3.40.50.620">
    <property type="entry name" value="HUPs"/>
    <property type="match status" value="1"/>
</dbReference>
<dbReference type="HAMAP" id="MF_00022">
    <property type="entry name" value="Glu_tRNA_synth_type1"/>
    <property type="match status" value="1"/>
</dbReference>
<dbReference type="InterPro" id="IPR045462">
    <property type="entry name" value="aa-tRNA-synth_I_cd-bd"/>
</dbReference>
<dbReference type="InterPro" id="IPR020751">
    <property type="entry name" value="aa-tRNA-synth_I_codon-bd_sub2"/>
</dbReference>
<dbReference type="InterPro" id="IPR001412">
    <property type="entry name" value="aa-tRNA-synth_I_CS"/>
</dbReference>
<dbReference type="InterPro" id="IPR008925">
    <property type="entry name" value="aa_tRNA-synth_I_cd-bd_sf"/>
</dbReference>
<dbReference type="InterPro" id="IPR004527">
    <property type="entry name" value="Glu-tRNA-ligase_bac/mito"/>
</dbReference>
<dbReference type="InterPro" id="IPR000924">
    <property type="entry name" value="Glu/Gln-tRNA-synth"/>
</dbReference>
<dbReference type="InterPro" id="IPR020058">
    <property type="entry name" value="Glu/Gln-tRNA-synth_Ib_cat-dom"/>
</dbReference>
<dbReference type="InterPro" id="IPR049940">
    <property type="entry name" value="GluQ/Sye"/>
</dbReference>
<dbReference type="InterPro" id="IPR033910">
    <property type="entry name" value="GluRS_core"/>
</dbReference>
<dbReference type="InterPro" id="IPR014729">
    <property type="entry name" value="Rossmann-like_a/b/a_fold"/>
</dbReference>
<dbReference type="NCBIfam" id="TIGR00464">
    <property type="entry name" value="gltX_bact"/>
    <property type="match status" value="1"/>
</dbReference>
<dbReference type="PANTHER" id="PTHR43311">
    <property type="entry name" value="GLUTAMATE--TRNA LIGASE"/>
    <property type="match status" value="1"/>
</dbReference>
<dbReference type="PANTHER" id="PTHR43311:SF2">
    <property type="entry name" value="GLUTAMATE--TRNA LIGASE, MITOCHONDRIAL-RELATED"/>
    <property type="match status" value="1"/>
</dbReference>
<dbReference type="Pfam" id="PF19269">
    <property type="entry name" value="Anticodon_2"/>
    <property type="match status" value="1"/>
</dbReference>
<dbReference type="Pfam" id="PF00749">
    <property type="entry name" value="tRNA-synt_1c"/>
    <property type="match status" value="1"/>
</dbReference>
<dbReference type="PRINTS" id="PR00987">
    <property type="entry name" value="TRNASYNTHGLU"/>
</dbReference>
<dbReference type="SUPFAM" id="SSF48163">
    <property type="entry name" value="An anticodon-binding domain of class I aminoacyl-tRNA synthetases"/>
    <property type="match status" value="1"/>
</dbReference>
<dbReference type="SUPFAM" id="SSF52374">
    <property type="entry name" value="Nucleotidylyl transferase"/>
    <property type="match status" value="1"/>
</dbReference>
<dbReference type="PROSITE" id="PS00178">
    <property type="entry name" value="AA_TRNA_LIGASE_I"/>
    <property type="match status" value="1"/>
</dbReference>
<gene>
    <name evidence="1" type="primary">gltX</name>
    <name type="ordered locus">MYPE10370</name>
</gene>
<evidence type="ECO:0000255" key="1">
    <source>
        <dbReference type="HAMAP-Rule" id="MF_00022"/>
    </source>
</evidence>